<proteinExistence type="inferred from homology"/>
<accession>Q6SW48</accession>
<accession>D2K3Q2</accession>
<feature type="chain" id="PRO_0000417851" description="Protein UL95">
    <location>
        <begin position="1"/>
        <end position="533"/>
    </location>
</feature>
<feature type="region of interest" description="Disordered" evidence="1">
    <location>
        <begin position="1"/>
        <end position="92"/>
    </location>
</feature>
<feature type="region of interest" description="Disordered" evidence="1">
    <location>
        <begin position="167"/>
        <end position="216"/>
    </location>
</feature>
<feature type="compositionally biased region" description="Basic and acidic residues" evidence="1">
    <location>
        <begin position="9"/>
        <end position="33"/>
    </location>
</feature>
<feature type="compositionally biased region" description="Low complexity" evidence="1">
    <location>
        <begin position="50"/>
        <end position="82"/>
    </location>
</feature>
<feature type="compositionally biased region" description="Basic residues" evidence="1">
    <location>
        <begin position="202"/>
        <end position="211"/>
    </location>
</feature>
<protein>
    <recommendedName>
        <fullName>Protein UL95</fullName>
    </recommendedName>
</protein>
<gene>
    <name type="primary">UL95</name>
</gene>
<comment type="function">
    <text>Participates in the expression of late viral mRNAs. Expressed before viral DNA replication, UL95 assembles at the viral pre-replication complexes (pre-RCs) containing the early viral protein UL44.</text>
</comment>
<comment type="subcellular location">
    <subcellularLocation>
        <location>Host nucleus</location>
    </subcellularLocation>
    <text>Recruited to nuclear replication compartments.</text>
</comment>
<comment type="similarity">
    <text evidence="2">Belongs to the herpesviridae UL95 family.</text>
</comment>
<evidence type="ECO:0000256" key="1">
    <source>
        <dbReference type="SAM" id="MobiDB-lite"/>
    </source>
</evidence>
<evidence type="ECO:0000305" key="2"/>
<reference key="1">
    <citation type="journal article" date="2004" name="J. Gen. Virol.">
        <title>Genetic content of wild-type human cytomegalovirus.</title>
        <authorList>
            <person name="Dolan A."/>
            <person name="Cunningham C."/>
            <person name="Hector R.D."/>
            <person name="Hassan-Walker A.F."/>
            <person name="Lee L."/>
            <person name="Addison C."/>
            <person name="Dargan D.J."/>
            <person name="McGeoch D.J."/>
            <person name="Gatherer D."/>
            <person name="Emery V.C."/>
            <person name="Griffiths P.D."/>
            <person name="Sinzger C."/>
            <person name="McSharry B.P."/>
            <person name="Wilkinson G.W.G."/>
            <person name="Davison A.J."/>
        </authorList>
    </citation>
    <scope>NUCLEOTIDE SEQUENCE [LARGE SCALE GENOMIC DNA]</scope>
</reference>
<dbReference type="EMBL" id="AY446894">
    <property type="protein sequence ID" value="AAR31646.1"/>
    <property type="molecule type" value="Genomic_DNA"/>
</dbReference>
<dbReference type="RefSeq" id="YP_081542.1">
    <property type="nucleotide sequence ID" value="NC_006273.2"/>
</dbReference>
<dbReference type="GeneID" id="3077502"/>
<dbReference type="KEGG" id="vg:3077502"/>
<dbReference type="Reactome" id="R-HSA-9609690">
    <property type="pathway name" value="HCMV Early Events"/>
</dbReference>
<dbReference type="Reactome" id="R-HSA-9610379">
    <property type="pathway name" value="HCMV Late Events"/>
</dbReference>
<dbReference type="Proteomes" id="UP000000938">
    <property type="component" value="Segment"/>
</dbReference>
<dbReference type="GO" id="GO:0042025">
    <property type="term" value="C:host cell nucleus"/>
    <property type="evidence" value="ECO:0007669"/>
    <property type="project" value="UniProtKB-SubCell"/>
</dbReference>
<dbReference type="InterPro" id="IPR004280">
    <property type="entry name" value="Herpes_UL95"/>
</dbReference>
<dbReference type="Pfam" id="PF03038">
    <property type="entry name" value="Herpes_UL95"/>
    <property type="match status" value="1"/>
</dbReference>
<sequence>MMAAAVVRAEVRRQRREERKKMASARTTEDPPENHVVADVACGTGAVTRSSSSSLVVSSSSASGSDESSSASPLSFPVSSPSTAVRSPGSAGVSTSLCSVERMVELSAQSPAADFSVSEAWRFEEAVNMALVACEAVSPYDRFRLIETPDENFLLVTNVIPRESAEVPVLDSSSSGGDSGPEDKKKNVGNKTAGEKNGGGSRAKRRRRRRAPKNDAATPSFLRRHDVLERFAAAAEPLPSLCVHDYALRNADRVTYDGELIYGSYLLYRKAHVELSLSSNKVQHVEAVLRQVYTPGLLDHHNVCDVEALLWLLYCGPRSFCARDTCFGREKNGCPFPALLPKLFYEPVRDYMTYMNLAELYVFVWYRGYEFPAPTPQATTAGGGGGGGSGGGGGAGACAVETSASAGRVDDAGDEVHLPLKPVSLDRLREVLQAVRGRFSGREVPAWPASSRTCLLCALYSQNRLCLDLARDEARTVSYSPIVIQDCAAAVTDVTLSHILPGQSTVSLFPVYHVGKLLDALSLNDAGLITLNL</sequence>
<organismHost>
    <name type="scientific">Homo sapiens</name>
    <name type="common">Human</name>
    <dbReference type="NCBI Taxonomy" id="9606"/>
</organismHost>
<keyword id="KW-0244">Early protein</keyword>
<keyword id="KW-1048">Host nucleus</keyword>
<keyword id="KW-1185">Reference proteome</keyword>
<organism>
    <name type="scientific">Human cytomegalovirus (strain Merlin)</name>
    <name type="common">HHV-5</name>
    <name type="synonym">Human herpesvirus 5</name>
    <dbReference type="NCBI Taxonomy" id="295027"/>
    <lineage>
        <taxon>Viruses</taxon>
        <taxon>Duplodnaviria</taxon>
        <taxon>Heunggongvirae</taxon>
        <taxon>Peploviricota</taxon>
        <taxon>Herviviricetes</taxon>
        <taxon>Herpesvirales</taxon>
        <taxon>Orthoherpesviridae</taxon>
        <taxon>Betaherpesvirinae</taxon>
        <taxon>Cytomegalovirus</taxon>
        <taxon>Cytomegalovirus humanbeta5</taxon>
        <taxon>Human cytomegalovirus</taxon>
    </lineage>
</organism>
<name>UL95_HCMVM</name>